<reference key="1">
    <citation type="submission" date="2008-05" db="EMBL/GenBank/DDBJ databases">
        <title>Complete sequence of Shigella boydii serotype 18 strain BS512.</title>
        <authorList>
            <person name="Rasko D.A."/>
            <person name="Rosovitz M."/>
            <person name="Maurelli A.T."/>
            <person name="Myers G."/>
            <person name="Seshadri R."/>
            <person name="Cer R."/>
            <person name="Jiang L."/>
            <person name="Ravel J."/>
            <person name="Sebastian Y."/>
        </authorList>
    </citation>
    <scope>NUCLEOTIDE SEQUENCE [LARGE SCALE GENOMIC DNA]</scope>
    <source>
        <strain>CDC 3083-94 / BS512</strain>
    </source>
</reference>
<accession>B2U5D7</accession>
<evidence type="ECO:0000255" key="1">
    <source>
        <dbReference type="HAMAP-Rule" id="MF_01601"/>
    </source>
</evidence>
<sequence>MIIVTGGAGFIGSNIVKALNDKGITDILVVDNLKDGTKFVNLVDLDIADYMDKEDFLIQIMAGEEFGDVEAIFHEGACSSTTEWDGKYMMDNNYQYSKELLHYCLEREIPFLYASSAATYGGRTSDFIESREYEKPLNVYGYSKFLFDEYVRQILPEANSQIVGFRYFNVYGPREGHKGSMASVAFHLNTQLNNGESPKLFEGSENFKRDFVYVGDVADVNLWFLENGVSGIFNLGTGRAESFQAVADATLAYHKKGQIEYIPFPDKLKGRYQAFTQADLTNLRAAGYDKPFKTVAEGVTEYMAWLNRDA</sequence>
<gene>
    <name evidence="1" type="primary">hldD</name>
    <name type="ordered locus">SbBS512_E4046</name>
</gene>
<protein>
    <recommendedName>
        <fullName evidence="1">ADP-L-glycero-D-manno-heptose-6-epimerase</fullName>
        <ecNumber evidence="1">5.1.3.20</ecNumber>
    </recommendedName>
    <alternativeName>
        <fullName evidence="1">ADP-L-glycero-beta-D-manno-heptose-6-epimerase</fullName>
        <shortName evidence="1">ADP-glyceromanno-heptose 6-epimerase</shortName>
        <shortName evidence="1">ADP-hep 6-epimerase</shortName>
        <shortName evidence="1">AGME</shortName>
    </alternativeName>
</protein>
<dbReference type="EC" id="5.1.3.20" evidence="1"/>
<dbReference type="EMBL" id="CP001063">
    <property type="protein sequence ID" value="ACD09007.1"/>
    <property type="molecule type" value="Genomic_DNA"/>
</dbReference>
<dbReference type="SMR" id="B2U5D7"/>
<dbReference type="STRING" id="344609.SbBS512_E4046"/>
<dbReference type="KEGG" id="sbc:SbBS512_E4046"/>
<dbReference type="HOGENOM" id="CLU_007383_1_3_6"/>
<dbReference type="UniPathway" id="UPA00356">
    <property type="reaction ID" value="UER00440"/>
</dbReference>
<dbReference type="Proteomes" id="UP000001030">
    <property type="component" value="Chromosome"/>
</dbReference>
<dbReference type="GO" id="GO:0008712">
    <property type="term" value="F:ADP-glyceromanno-heptose 6-epimerase activity"/>
    <property type="evidence" value="ECO:0007669"/>
    <property type="project" value="UniProtKB-UniRule"/>
</dbReference>
<dbReference type="GO" id="GO:0050661">
    <property type="term" value="F:NADP binding"/>
    <property type="evidence" value="ECO:0007669"/>
    <property type="project" value="InterPro"/>
</dbReference>
<dbReference type="GO" id="GO:0097171">
    <property type="term" value="P:ADP-L-glycero-beta-D-manno-heptose biosynthetic process"/>
    <property type="evidence" value="ECO:0007669"/>
    <property type="project" value="UniProtKB-UniPathway"/>
</dbReference>
<dbReference type="GO" id="GO:0005975">
    <property type="term" value="P:carbohydrate metabolic process"/>
    <property type="evidence" value="ECO:0007669"/>
    <property type="project" value="UniProtKB-UniRule"/>
</dbReference>
<dbReference type="CDD" id="cd05248">
    <property type="entry name" value="ADP_GME_SDR_e"/>
    <property type="match status" value="1"/>
</dbReference>
<dbReference type="Gene3D" id="3.40.50.720">
    <property type="entry name" value="NAD(P)-binding Rossmann-like Domain"/>
    <property type="match status" value="1"/>
</dbReference>
<dbReference type="Gene3D" id="3.90.25.10">
    <property type="entry name" value="UDP-galactose 4-epimerase, domain 1"/>
    <property type="match status" value="1"/>
</dbReference>
<dbReference type="HAMAP" id="MF_01601">
    <property type="entry name" value="Heptose_epimerase"/>
    <property type="match status" value="1"/>
</dbReference>
<dbReference type="InterPro" id="IPR001509">
    <property type="entry name" value="Epimerase_deHydtase"/>
</dbReference>
<dbReference type="InterPro" id="IPR011912">
    <property type="entry name" value="Heptose_epim"/>
</dbReference>
<dbReference type="InterPro" id="IPR036291">
    <property type="entry name" value="NAD(P)-bd_dom_sf"/>
</dbReference>
<dbReference type="NCBIfam" id="TIGR02197">
    <property type="entry name" value="heptose_epim"/>
    <property type="match status" value="1"/>
</dbReference>
<dbReference type="NCBIfam" id="NF008360">
    <property type="entry name" value="PRK11150.1"/>
    <property type="match status" value="1"/>
</dbReference>
<dbReference type="PANTHER" id="PTHR43103:SF3">
    <property type="entry name" value="ADP-L-GLYCERO-D-MANNO-HEPTOSE-6-EPIMERASE"/>
    <property type="match status" value="1"/>
</dbReference>
<dbReference type="PANTHER" id="PTHR43103">
    <property type="entry name" value="NUCLEOSIDE-DIPHOSPHATE-SUGAR EPIMERASE"/>
    <property type="match status" value="1"/>
</dbReference>
<dbReference type="Pfam" id="PF01370">
    <property type="entry name" value="Epimerase"/>
    <property type="match status" value="1"/>
</dbReference>
<dbReference type="SUPFAM" id="SSF51735">
    <property type="entry name" value="NAD(P)-binding Rossmann-fold domains"/>
    <property type="match status" value="1"/>
</dbReference>
<organism>
    <name type="scientific">Shigella boydii serotype 18 (strain CDC 3083-94 / BS512)</name>
    <dbReference type="NCBI Taxonomy" id="344609"/>
    <lineage>
        <taxon>Bacteria</taxon>
        <taxon>Pseudomonadati</taxon>
        <taxon>Pseudomonadota</taxon>
        <taxon>Gammaproteobacteria</taxon>
        <taxon>Enterobacterales</taxon>
        <taxon>Enterobacteriaceae</taxon>
        <taxon>Shigella</taxon>
    </lineage>
</organism>
<keyword id="KW-0007">Acetylation</keyword>
<keyword id="KW-0119">Carbohydrate metabolism</keyword>
<keyword id="KW-0413">Isomerase</keyword>
<keyword id="KW-0521">NADP</keyword>
<keyword id="KW-1185">Reference proteome</keyword>
<proteinExistence type="inferred from homology"/>
<comment type="function">
    <text evidence="1">Catalyzes the interconversion between ADP-D-glycero-beta-D-manno-heptose and ADP-L-glycero-beta-D-manno-heptose via an epimerization at carbon 6 of the heptose.</text>
</comment>
<comment type="catalytic activity">
    <reaction evidence="1">
        <text>ADP-D-glycero-beta-D-manno-heptose = ADP-L-glycero-beta-D-manno-heptose</text>
        <dbReference type="Rhea" id="RHEA:17577"/>
        <dbReference type="ChEBI" id="CHEBI:59967"/>
        <dbReference type="ChEBI" id="CHEBI:61506"/>
        <dbReference type="EC" id="5.1.3.20"/>
    </reaction>
</comment>
<comment type="cofactor">
    <cofactor evidence="1">
        <name>NADP(+)</name>
        <dbReference type="ChEBI" id="CHEBI:58349"/>
    </cofactor>
    <text evidence="1">Binds 1 NADP(+) per subunit.</text>
</comment>
<comment type="pathway">
    <text evidence="1">Nucleotide-sugar biosynthesis; ADP-L-glycero-beta-D-manno-heptose biosynthesis; ADP-L-glycero-beta-D-manno-heptose from D-glycero-beta-D-manno-heptose 7-phosphate: step 4/4.</text>
</comment>
<comment type="subunit">
    <text evidence="1">Homopentamer.</text>
</comment>
<comment type="domain">
    <text evidence="1">Contains a large N-terminal NADP-binding domain, and a smaller C-terminal substrate-binding domain.</text>
</comment>
<comment type="similarity">
    <text evidence="1">Belongs to the NAD(P)-dependent epimerase/dehydratase family. HldD subfamily.</text>
</comment>
<name>HLDD_SHIB3</name>
<feature type="chain" id="PRO_1000190412" description="ADP-L-glycero-D-manno-heptose-6-epimerase">
    <location>
        <begin position="1"/>
        <end position="310"/>
    </location>
</feature>
<feature type="active site" description="Proton acceptor" evidence="1">
    <location>
        <position position="140"/>
    </location>
</feature>
<feature type="active site" description="Proton acceptor" evidence="1">
    <location>
        <position position="178"/>
    </location>
</feature>
<feature type="binding site" evidence="1">
    <location>
        <begin position="10"/>
        <end position="11"/>
    </location>
    <ligand>
        <name>NADP(+)</name>
        <dbReference type="ChEBI" id="CHEBI:58349"/>
    </ligand>
</feature>
<feature type="binding site" evidence="1">
    <location>
        <begin position="31"/>
        <end position="32"/>
    </location>
    <ligand>
        <name>NADP(+)</name>
        <dbReference type="ChEBI" id="CHEBI:58349"/>
    </ligand>
</feature>
<feature type="binding site" evidence="1">
    <location>
        <position position="38"/>
    </location>
    <ligand>
        <name>NADP(+)</name>
        <dbReference type="ChEBI" id="CHEBI:58349"/>
    </ligand>
</feature>
<feature type="binding site" evidence="1">
    <location>
        <position position="53"/>
    </location>
    <ligand>
        <name>NADP(+)</name>
        <dbReference type="ChEBI" id="CHEBI:58349"/>
    </ligand>
</feature>
<feature type="binding site" evidence="1">
    <location>
        <begin position="75"/>
        <end position="79"/>
    </location>
    <ligand>
        <name>NADP(+)</name>
        <dbReference type="ChEBI" id="CHEBI:58349"/>
    </ligand>
</feature>
<feature type="binding site" evidence="1">
    <location>
        <position position="92"/>
    </location>
    <ligand>
        <name>NADP(+)</name>
        <dbReference type="ChEBI" id="CHEBI:58349"/>
    </ligand>
</feature>
<feature type="binding site" evidence="1">
    <location>
        <position position="144"/>
    </location>
    <ligand>
        <name>NADP(+)</name>
        <dbReference type="ChEBI" id="CHEBI:58349"/>
    </ligand>
</feature>
<feature type="binding site" evidence="1">
    <location>
        <position position="169"/>
    </location>
    <ligand>
        <name>substrate</name>
    </ligand>
</feature>
<feature type="binding site" evidence="1">
    <location>
        <position position="170"/>
    </location>
    <ligand>
        <name>NADP(+)</name>
        <dbReference type="ChEBI" id="CHEBI:58349"/>
    </ligand>
</feature>
<feature type="binding site" evidence="1">
    <location>
        <position position="178"/>
    </location>
    <ligand>
        <name>NADP(+)</name>
        <dbReference type="ChEBI" id="CHEBI:58349"/>
    </ligand>
</feature>
<feature type="binding site" evidence="1">
    <location>
        <position position="180"/>
    </location>
    <ligand>
        <name>substrate</name>
    </ligand>
</feature>
<feature type="binding site" evidence="1">
    <location>
        <position position="187"/>
    </location>
    <ligand>
        <name>substrate</name>
    </ligand>
</feature>
<feature type="binding site" evidence="1">
    <location>
        <begin position="201"/>
        <end position="204"/>
    </location>
    <ligand>
        <name>substrate</name>
    </ligand>
</feature>
<feature type="binding site" evidence="1">
    <location>
        <position position="209"/>
    </location>
    <ligand>
        <name>substrate</name>
    </ligand>
</feature>
<feature type="binding site" evidence="1">
    <location>
        <position position="272"/>
    </location>
    <ligand>
        <name>substrate</name>
    </ligand>
</feature>
<feature type="modified residue" description="N6-acetyllysine" evidence="1">
    <location>
        <position position="267"/>
    </location>
</feature>